<organism>
    <name type="scientific">Hydrogenobaculum sp. (strain Y04AAS1)</name>
    <dbReference type="NCBI Taxonomy" id="380749"/>
    <lineage>
        <taxon>Bacteria</taxon>
        <taxon>Pseudomonadati</taxon>
        <taxon>Aquificota</taxon>
        <taxon>Aquificia</taxon>
        <taxon>Aquificales</taxon>
        <taxon>Aquificaceae</taxon>
        <taxon>Hydrogenobaculum</taxon>
    </lineage>
</organism>
<feature type="chain" id="PRO_1000099288" description="Polyamine aminopropyltransferase">
    <location>
        <begin position="1"/>
        <end position="280"/>
    </location>
</feature>
<feature type="domain" description="PABS" evidence="1">
    <location>
        <begin position="3"/>
        <end position="237"/>
    </location>
</feature>
<feature type="active site" description="Proton acceptor" evidence="1">
    <location>
        <position position="157"/>
    </location>
</feature>
<feature type="binding site" evidence="1">
    <location>
        <position position="33"/>
    </location>
    <ligand>
        <name>S-methyl-5'-thioadenosine</name>
        <dbReference type="ChEBI" id="CHEBI:17509"/>
    </ligand>
</feature>
<feature type="binding site" evidence="1">
    <location>
        <position position="64"/>
    </location>
    <ligand>
        <name>spermidine</name>
        <dbReference type="ChEBI" id="CHEBI:57834"/>
    </ligand>
</feature>
<feature type="binding site" evidence="1">
    <location>
        <position position="88"/>
    </location>
    <ligand>
        <name>spermidine</name>
        <dbReference type="ChEBI" id="CHEBI:57834"/>
    </ligand>
</feature>
<feature type="binding site" evidence="1">
    <location>
        <position position="108"/>
    </location>
    <ligand>
        <name>S-methyl-5'-thioadenosine</name>
        <dbReference type="ChEBI" id="CHEBI:17509"/>
    </ligand>
</feature>
<feature type="binding site" evidence="1">
    <location>
        <begin position="139"/>
        <end position="140"/>
    </location>
    <ligand>
        <name>S-methyl-5'-thioadenosine</name>
        <dbReference type="ChEBI" id="CHEBI:17509"/>
    </ligand>
</feature>
<feature type="binding site" evidence="1">
    <location>
        <begin position="157"/>
        <end position="160"/>
    </location>
    <ligand>
        <name>spermidine</name>
        <dbReference type="ChEBI" id="CHEBI:57834"/>
    </ligand>
</feature>
<evidence type="ECO:0000255" key="1">
    <source>
        <dbReference type="HAMAP-Rule" id="MF_00198"/>
    </source>
</evidence>
<proteinExistence type="inferred from homology"/>
<keyword id="KW-0963">Cytoplasm</keyword>
<keyword id="KW-0620">Polyamine biosynthesis</keyword>
<keyword id="KW-0745">Spermidine biosynthesis</keyword>
<keyword id="KW-0808">Transferase</keyword>
<accession>B4U8W2</accession>
<dbReference type="EC" id="2.5.1.16" evidence="1"/>
<dbReference type="EMBL" id="CP001130">
    <property type="protein sequence ID" value="ACG57573.1"/>
    <property type="molecule type" value="Genomic_DNA"/>
</dbReference>
<dbReference type="RefSeq" id="WP_012513929.1">
    <property type="nucleotide sequence ID" value="NC_011126.1"/>
</dbReference>
<dbReference type="SMR" id="B4U8W2"/>
<dbReference type="STRING" id="380749.HY04AAS1_0886"/>
<dbReference type="KEGG" id="hya:HY04AAS1_0886"/>
<dbReference type="eggNOG" id="COG0421">
    <property type="taxonomic scope" value="Bacteria"/>
</dbReference>
<dbReference type="HOGENOM" id="CLU_048199_3_1_0"/>
<dbReference type="OrthoDB" id="9793120at2"/>
<dbReference type="UniPathway" id="UPA00248">
    <property type="reaction ID" value="UER00314"/>
</dbReference>
<dbReference type="GO" id="GO:0005829">
    <property type="term" value="C:cytosol"/>
    <property type="evidence" value="ECO:0007669"/>
    <property type="project" value="TreeGrafter"/>
</dbReference>
<dbReference type="GO" id="GO:0004766">
    <property type="term" value="F:spermidine synthase activity"/>
    <property type="evidence" value="ECO:0007669"/>
    <property type="project" value="UniProtKB-UniRule"/>
</dbReference>
<dbReference type="GO" id="GO:0008295">
    <property type="term" value="P:spermidine biosynthetic process"/>
    <property type="evidence" value="ECO:0007669"/>
    <property type="project" value="UniProtKB-UniRule"/>
</dbReference>
<dbReference type="CDD" id="cd02440">
    <property type="entry name" value="AdoMet_MTases"/>
    <property type="match status" value="1"/>
</dbReference>
<dbReference type="FunFam" id="2.30.140.10:FF:000023">
    <property type="entry name" value="Polyamine aminopropyltransferase 1"/>
    <property type="match status" value="1"/>
</dbReference>
<dbReference type="Gene3D" id="2.30.140.10">
    <property type="entry name" value="Spermidine synthase, tetramerisation domain"/>
    <property type="match status" value="1"/>
</dbReference>
<dbReference type="Gene3D" id="3.40.50.150">
    <property type="entry name" value="Vaccinia Virus protein VP39"/>
    <property type="match status" value="1"/>
</dbReference>
<dbReference type="HAMAP" id="MF_00198">
    <property type="entry name" value="Spermidine_synth"/>
    <property type="match status" value="1"/>
</dbReference>
<dbReference type="InterPro" id="IPR030374">
    <property type="entry name" value="PABS"/>
</dbReference>
<dbReference type="InterPro" id="IPR030373">
    <property type="entry name" value="PABS_CS"/>
</dbReference>
<dbReference type="InterPro" id="IPR029063">
    <property type="entry name" value="SAM-dependent_MTases_sf"/>
</dbReference>
<dbReference type="InterPro" id="IPR001045">
    <property type="entry name" value="Spermi_synthase"/>
</dbReference>
<dbReference type="InterPro" id="IPR035246">
    <property type="entry name" value="Spermidine_synt_N"/>
</dbReference>
<dbReference type="InterPro" id="IPR037163">
    <property type="entry name" value="Spermidine_synt_N_sf"/>
</dbReference>
<dbReference type="NCBIfam" id="NF037959">
    <property type="entry name" value="MFS_SpdSyn"/>
    <property type="match status" value="1"/>
</dbReference>
<dbReference type="NCBIfam" id="NF002010">
    <property type="entry name" value="PRK00811.1"/>
    <property type="match status" value="1"/>
</dbReference>
<dbReference type="NCBIfam" id="TIGR00417">
    <property type="entry name" value="speE"/>
    <property type="match status" value="1"/>
</dbReference>
<dbReference type="PANTHER" id="PTHR11558:SF11">
    <property type="entry name" value="SPERMIDINE SYNTHASE"/>
    <property type="match status" value="1"/>
</dbReference>
<dbReference type="PANTHER" id="PTHR11558">
    <property type="entry name" value="SPERMIDINE/SPERMINE SYNTHASE"/>
    <property type="match status" value="1"/>
</dbReference>
<dbReference type="Pfam" id="PF17284">
    <property type="entry name" value="Spermine_synt_N"/>
    <property type="match status" value="1"/>
</dbReference>
<dbReference type="Pfam" id="PF01564">
    <property type="entry name" value="Spermine_synth"/>
    <property type="match status" value="1"/>
</dbReference>
<dbReference type="SUPFAM" id="SSF53335">
    <property type="entry name" value="S-adenosyl-L-methionine-dependent methyltransferases"/>
    <property type="match status" value="1"/>
</dbReference>
<dbReference type="PROSITE" id="PS01330">
    <property type="entry name" value="PABS_1"/>
    <property type="match status" value="1"/>
</dbReference>
<dbReference type="PROSITE" id="PS51006">
    <property type="entry name" value="PABS_2"/>
    <property type="match status" value="1"/>
</dbReference>
<comment type="function">
    <text evidence="1">Catalyzes the irreversible transfer of a propylamine group from the amino donor S-adenosylmethioninamine (decarboxy-AdoMet) to putrescine (1,4-diaminobutane) to yield spermidine.</text>
</comment>
<comment type="catalytic activity">
    <reaction evidence="1">
        <text>S-adenosyl 3-(methylsulfanyl)propylamine + putrescine = S-methyl-5'-thioadenosine + spermidine + H(+)</text>
        <dbReference type="Rhea" id="RHEA:12721"/>
        <dbReference type="ChEBI" id="CHEBI:15378"/>
        <dbReference type="ChEBI" id="CHEBI:17509"/>
        <dbReference type="ChEBI" id="CHEBI:57443"/>
        <dbReference type="ChEBI" id="CHEBI:57834"/>
        <dbReference type="ChEBI" id="CHEBI:326268"/>
        <dbReference type="EC" id="2.5.1.16"/>
    </reaction>
</comment>
<comment type="pathway">
    <text evidence="1">Amine and polyamine biosynthesis; spermidine biosynthesis; spermidine from putrescine: step 1/1.</text>
</comment>
<comment type="subunit">
    <text evidence="1">Homodimer or homotetramer.</text>
</comment>
<comment type="subcellular location">
    <subcellularLocation>
        <location evidence="1">Cytoplasm</location>
    </subcellularLocation>
</comment>
<comment type="similarity">
    <text evidence="1">Belongs to the spermidine/spermine synthase family.</text>
</comment>
<protein>
    <recommendedName>
        <fullName evidence="1">Polyamine aminopropyltransferase</fullName>
    </recommendedName>
    <alternativeName>
        <fullName evidence="1">Putrescine aminopropyltransferase</fullName>
        <shortName evidence="1">PAPT</shortName>
    </alternativeName>
    <alternativeName>
        <fullName evidence="1">Spermidine synthase</fullName>
        <shortName evidence="1">SPDS</shortName>
        <shortName evidence="1">SPDSY</shortName>
        <ecNumber evidence="1">2.5.1.16</ecNumber>
    </alternativeName>
</protein>
<gene>
    <name evidence="1" type="primary">speE</name>
    <name type="ordered locus">HY04AAS1_0886</name>
</gene>
<name>SPEE_HYDS0</name>
<reference key="1">
    <citation type="journal article" date="2009" name="J. Bacteriol.">
        <title>Complete and draft genome sequences of six members of the Aquificales.</title>
        <authorList>
            <person name="Reysenbach A.-L."/>
            <person name="Hamamura N."/>
            <person name="Podar M."/>
            <person name="Griffiths E."/>
            <person name="Ferreira S."/>
            <person name="Hochstein R."/>
            <person name="Heidelberg J."/>
            <person name="Johnson J."/>
            <person name="Mead D."/>
            <person name="Pohorille A."/>
            <person name="Sarmiento M."/>
            <person name="Schweighofer K."/>
            <person name="Seshadri R."/>
            <person name="Voytek M.A."/>
        </authorList>
    </citation>
    <scope>NUCLEOTIDE SEQUENCE [LARGE SCALE GENOMIC DNA]</scope>
    <source>
        <strain>Y04AAS1</strain>
    </source>
</reference>
<sequence length="280" mass="32596">MKDVYFMERDPYAPIRHCYGISKILYEGKSKYQEIQVVESHYFGKILILDGVVQFTEKNEFFYHEMLTHPVMFAHKNPQNVLIIGGGDGGILREVLKHKSVKKAVLVDIDKDVVEVSKKFFPTVACSMDDPRAIILNEDGFKYIQDYKNEFDVIIVDSTDPVGFAHVLTTEEFFKYVFEALKEDGIYVGQSESLHYHLDIVVRFQKALKKSFPIVDLYTTVIPVYAGYWWSFSVGSKVYNPREISREVDVETRFYSDEIHKNAFLPPNFYQKILNGNFKY</sequence>